<reference key="1">
    <citation type="submission" date="2009-06" db="EMBL/GenBank/DDBJ databases">
        <title>Complete sequence of chromosome of Geopacillus sp. WCH70.</title>
        <authorList>
            <consortium name="US DOE Joint Genome Institute"/>
            <person name="Lucas S."/>
            <person name="Copeland A."/>
            <person name="Lapidus A."/>
            <person name="Glavina del Rio T."/>
            <person name="Dalin E."/>
            <person name="Tice H."/>
            <person name="Bruce D."/>
            <person name="Goodwin L."/>
            <person name="Pitluck S."/>
            <person name="Chertkov O."/>
            <person name="Brettin T."/>
            <person name="Detter J.C."/>
            <person name="Han C."/>
            <person name="Larimer F."/>
            <person name="Land M."/>
            <person name="Hauser L."/>
            <person name="Kyrpides N."/>
            <person name="Mikhailova N."/>
            <person name="Brumm P."/>
            <person name="Mead D.A."/>
            <person name="Richardson P."/>
        </authorList>
    </citation>
    <scope>NUCLEOTIDE SEQUENCE [LARGE SCALE GENOMIC DNA]</scope>
    <source>
        <strain>WCH70</strain>
    </source>
</reference>
<name>RBFA_GEOSW</name>
<organism>
    <name type="scientific">Geobacillus sp. (strain WCH70)</name>
    <dbReference type="NCBI Taxonomy" id="471223"/>
    <lineage>
        <taxon>Bacteria</taxon>
        <taxon>Bacillati</taxon>
        <taxon>Bacillota</taxon>
        <taxon>Bacilli</taxon>
        <taxon>Bacillales</taxon>
        <taxon>Anoxybacillaceae</taxon>
        <taxon>Geobacillus</taxon>
    </lineage>
</organism>
<feature type="chain" id="PRO_1000201636" description="Ribosome-binding factor A">
    <location>
        <begin position="1"/>
        <end position="126"/>
    </location>
</feature>
<comment type="function">
    <text evidence="1">One of several proteins that assist in the late maturation steps of the functional core of the 30S ribosomal subunit. Associates with free 30S ribosomal subunits (but not with 30S subunits that are part of 70S ribosomes or polysomes). Required for efficient processing of 16S rRNA. May interact with the 5'-terminal helix region of 16S rRNA.</text>
</comment>
<comment type="subunit">
    <text evidence="1">Monomer. Binds 30S ribosomal subunits, but not 50S ribosomal subunits or 70S ribosomes.</text>
</comment>
<comment type="subcellular location">
    <subcellularLocation>
        <location evidence="1">Cytoplasm</location>
    </subcellularLocation>
</comment>
<comment type="similarity">
    <text evidence="1">Belongs to the RbfA family.</text>
</comment>
<accession>C5D9D1</accession>
<gene>
    <name evidence="1" type="primary">rbfA</name>
    <name type="ordered locus">GWCH70_1157</name>
</gene>
<proteinExistence type="inferred from homology"/>
<evidence type="ECO:0000255" key="1">
    <source>
        <dbReference type="HAMAP-Rule" id="MF_00003"/>
    </source>
</evidence>
<keyword id="KW-0963">Cytoplasm</keyword>
<keyword id="KW-0690">Ribosome biogenesis</keyword>
<protein>
    <recommendedName>
        <fullName evidence="1">Ribosome-binding factor A</fullName>
    </recommendedName>
</protein>
<sequence>MNLRATRVGEQMKKELSDIIGRKLKDPRIGFVTVTDVRVTGDLQQAKVYISVLGDEEQRQNTLKGLEKAKGFIRSEIGQRIRLRKTPEIFFEIDESIEYGNRIEQLIRQISTEHEGGKKEEENKEE</sequence>
<dbReference type="EMBL" id="CP001638">
    <property type="protein sequence ID" value="ACS24017.1"/>
    <property type="molecule type" value="Genomic_DNA"/>
</dbReference>
<dbReference type="SMR" id="C5D9D1"/>
<dbReference type="STRING" id="471223.GWCH70_1157"/>
<dbReference type="KEGG" id="gwc:GWCH70_1157"/>
<dbReference type="eggNOG" id="COG0858">
    <property type="taxonomic scope" value="Bacteria"/>
</dbReference>
<dbReference type="HOGENOM" id="CLU_089475_6_3_9"/>
<dbReference type="OrthoDB" id="307788at2"/>
<dbReference type="GO" id="GO:0005829">
    <property type="term" value="C:cytosol"/>
    <property type="evidence" value="ECO:0007669"/>
    <property type="project" value="TreeGrafter"/>
</dbReference>
<dbReference type="GO" id="GO:0043024">
    <property type="term" value="F:ribosomal small subunit binding"/>
    <property type="evidence" value="ECO:0007669"/>
    <property type="project" value="TreeGrafter"/>
</dbReference>
<dbReference type="GO" id="GO:0030490">
    <property type="term" value="P:maturation of SSU-rRNA"/>
    <property type="evidence" value="ECO:0007669"/>
    <property type="project" value="UniProtKB-UniRule"/>
</dbReference>
<dbReference type="FunFam" id="3.30.300.20:FF:000009">
    <property type="entry name" value="Ribosome-binding factor A"/>
    <property type="match status" value="1"/>
</dbReference>
<dbReference type="Gene3D" id="3.30.300.20">
    <property type="match status" value="1"/>
</dbReference>
<dbReference type="HAMAP" id="MF_00003">
    <property type="entry name" value="RbfA"/>
    <property type="match status" value="1"/>
</dbReference>
<dbReference type="InterPro" id="IPR015946">
    <property type="entry name" value="KH_dom-like_a/b"/>
</dbReference>
<dbReference type="InterPro" id="IPR000238">
    <property type="entry name" value="RbfA"/>
</dbReference>
<dbReference type="InterPro" id="IPR023799">
    <property type="entry name" value="RbfA_dom_sf"/>
</dbReference>
<dbReference type="InterPro" id="IPR020053">
    <property type="entry name" value="Ribosome-bd_factorA_CS"/>
</dbReference>
<dbReference type="NCBIfam" id="TIGR00082">
    <property type="entry name" value="rbfA"/>
    <property type="match status" value="1"/>
</dbReference>
<dbReference type="PANTHER" id="PTHR33515">
    <property type="entry name" value="RIBOSOME-BINDING FACTOR A, CHLOROPLASTIC-RELATED"/>
    <property type="match status" value="1"/>
</dbReference>
<dbReference type="PANTHER" id="PTHR33515:SF1">
    <property type="entry name" value="RIBOSOME-BINDING FACTOR A, CHLOROPLASTIC-RELATED"/>
    <property type="match status" value="1"/>
</dbReference>
<dbReference type="Pfam" id="PF02033">
    <property type="entry name" value="RBFA"/>
    <property type="match status" value="1"/>
</dbReference>
<dbReference type="SUPFAM" id="SSF89919">
    <property type="entry name" value="Ribosome-binding factor A, RbfA"/>
    <property type="match status" value="1"/>
</dbReference>
<dbReference type="PROSITE" id="PS01319">
    <property type="entry name" value="RBFA"/>
    <property type="match status" value="1"/>
</dbReference>